<dbReference type="EMBL" id="AJ627251">
    <property type="protein sequence ID" value="CAF28645.1"/>
    <property type="molecule type" value="Genomic_DNA"/>
</dbReference>
<dbReference type="RefSeq" id="YP_053205.1">
    <property type="nucleotide sequence ID" value="NC_006050.1"/>
</dbReference>
<dbReference type="SMR" id="Q6EW01"/>
<dbReference type="GeneID" id="2896173"/>
<dbReference type="GO" id="GO:0009535">
    <property type="term" value="C:chloroplast thylakoid membrane"/>
    <property type="evidence" value="ECO:0007669"/>
    <property type="project" value="UniProtKB-SubCell"/>
</dbReference>
<dbReference type="GO" id="GO:0005886">
    <property type="term" value="C:plasma membrane"/>
    <property type="evidence" value="ECO:0007669"/>
    <property type="project" value="TreeGrafter"/>
</dbReference>
<dbReference type="GO" id="GO:0020037">
    <property type="term" value="F:heme binding"/>
    <property type="evidence" value="ECO:0007669"/>
    <property type="project" value="InterPro"/>
</dbReference>
<dbReference type="GO" id="GO:0017004">
    <property type="term" value="P:cytochrome complex assembly"/>
    <property type="evidence" value="ECO:0007669"/>
    <property type="project" value="UniProtKB-UniRule"/>
</dbReference>
<dbReference type="HAMAP" id="MF_01391">
    <property type="entry name" value="CytC_CcsA"/>
    <property type="match status" value="1"/>
</dbReference>
<dbReference type="InterPro" id="IPR002541">
    <property type="entry name" value="Cyt_c_assembly"/>
</dbReference>
<dbReference type="InterPro" id="IPR017562">
    <property type="entry name" value="Cyt_c_biogenesis_CcsA"/>
</dbReference>
<dbReference type="InterPro" id="IPR045062">
    <property type="entry name" value="Cyt_c_biogenesis_CcsA/CcmC"/>
</dbReference>
<dbReference type="NCBIfam" id="TIGR03144">
    <property type="entry name" value="cytochr_II_ccsB"/>
    <property type="match status" value="1"/>
</dbReference>
<dbReference type="PANTHER" id="PTHR30071:SF1">
    <property type="entry name" value="CYTOCHROME B_B6 PROTEIN-RELATED"/>
    <property type="match status" value="1"/>
</dbReference>
<dbReference type="PANTHER" id="PTHR30071">
    <property type="entry name" value="HEME EXPORTER PROTEIN C"/>
    <property type="match status" value="1"/>
</dbReference>
<dbReference type="Pfam" id="PF01578">
    <property type="entry name" value="Cytochrom_C_asm"/>
    <property type="match status" value="1"/>
</dbReference>
<organism>
    <name type="scientific">Nymphaea alba</name>
    <name type="common">White water-lily</name>
    <name type="synonym">Castalia alba</name>
    <dbReference type="NCBI Taxonomy" id="34301"/>
    <lineage>
        <taxon>Eukaryota</taxon>
        <taxon>Viridiplantae</taxon>
        <taxon>Streptophyta</taxon>
        <taxon>Embryophyta</taxon>
        <taxon>Tracheophyta</taxon>
        <taxon>Spermatophyta</taxon>
        <taxon>Magnoliopsida</taxon>
        <taxon>Nymphaeales</taxon>
        <taxon>Nymphaeaceae</taxon>
        <taxon>Nymphaea</taxon>
    </lineage>
</organism>
<name>CCSA_NYMAL</name>
<sequence length="308" mass="35227">MIFATLEHILTHISFSIISIVIPTHLMTLVYEIVGLCDSSEKGMITTFFCITGLLVTRWIYSGHVPLSDLYESLMFLSWSFSLIHIVPYFRNYKNFFSKITAPSAILTQGFATSGLLTKMHQSAILVPALQSRWLMMHVSMMLLSYAALLCGSLLSITLLVITFRRKIDIFGKTNHLLISSFSFDETQYVNFSFRNYHRYQLTQRLDYWSYRVIGLGFTLLTIGILSGAVWANEAWGSYWNWDPKETWAFITWTVFAIYLHTRTNKSLQGANSAIVASMGFLIIWICYFGVNLLGRGLHSYGSFTLNI</sequence>
<feature type="chain" id="PRO_0000353775" description="Cytochrome c biogenesis protein CcsA">
    <location>
        <begin position="1"/>
        <end position="308"/>
    </location>
</feature>
<feature type="transmembrane region" description="Helical" evidence="1">
    <location>
        <begin position="17"/>
        <end position="37"/>
    </location>
</feature>
<feature type="transmembrane region" description="Helical" evidence="1">
    <location>
        <begin position="43"/>
        <end position="63"/>
    </location>
</feature>
<feature type="transmembrane region" description="Helical" evidence="1">
    <location>
        <begin position="70"/>
        <end position="90"/>
    </location>
</feature>
<feature type="transmembrane region" description="Helical" evidence="1">
    <location>
        <begin position="142"/>
        <end position="162"/>
    </location>
</feature>
<feature type="transmembrane region" description="Helical" evidence="1">
    <location>
        <begin position="213"/>
        <end position="233"/>
    </location>
</feature>
<feature type="transmembrane region" description="Helical" evidence="1">
    <location>
        <begin position="246"/>
        <end position="260"/>
    </location>
</feature>
<feature type="transmembrane region" description="Helical" evidence="1">
    <location>
        <begin position="274"/>
        <end position="294"/>
    </location>
</feature>
<evidence type="ECO:0000255" key="1">
    <source>
        <dbReference type="HAMAP-Rule" id="MF_01391"/>
    </source>
</evidence>
<comment type="function">
    <text evidence="1">Required during biogenesis of c-type cytochromes (cytochrome c6 and cytochrome f) at the step of heme attachment.</text>
</comment>
<comment type="subunit">
    <text evidence="1">May interact with Ccs1.</text>
</comment>
<comment type="subcellular location">
    <subcellularLocation>
        <location evidence="1">Plastid</location>
        <location evidence="1">Chloroplast thylakoid membrane</location>
        <topology evidence="1">Multi-pass membrane protein</topology>
    </subcellularLocation>
</comment>
<comment type="similarity">
    <text evidence="1">Belongs to the CcmF/CycK/Ccl1/NrfE/CcsA family.</text>
</comment>
<keyword id="KW-0150">Chloroplast</keyword>
<keyword id="KW-0201">Cytochrome c-type biogenesis</keyword>
<keyword id="KW-0472">Membrane</keyword>
<keyword id="KW-0934">Plastid</keyword>
<keyword id="KW-0793">Thylakoid</keyword>
<keyword id="KW-0812">Transmembrane</keyword>
<keyword id="KW-1133">Transmembrane helix</keyword>
<geneLocation type="chloroplast"/>
<proteinExistence type="inferred from homology"/>
<protein>
    <recommendedName>
        <fullName evidence="1">Cytochrome c biogenesis protein CcsA</fullName>
    </recommendedName>
</protein>
<reference key="1">
    <citation type="journal article" date="2004" name="Mol. Biol. Evol.">
        <title>The chloroplast genome of Nymphaea alba: whole-genome analyses and the problem of identifying the most basal angiosperm.</title>
        <authorList>
            <person name="Goremykin V.V."/>
            <person name="Hirsch-Ernst K.I."/>
            <person name="Woelfl S."/>
            <person name="Hellwig F.H."/>
        </authorList>
    </citation>
    <scope>NUCLEOTIDE SEQUENCE [LARGE SCALE GENOMIC DNA]</scope>
</reference>
<gene>
    <name evidence="1" type="primary">ccsA</name>
</gene>
<accession>Q6EW01</accession>